<proteinExistence type="inferred from homology"/>
<comment type="alternative products">
    <event type="alternative splicing"/>
    <isoform>
        <id>O82178-1</id>
        <name>1</name>
        <sequence type="displayed"/>
    </isoform>
    <text>A number of isoforms are produced. According to EST sequences.</text>
</comment>
<comment type="similarity">
    <text evidence="1">Belongs to the PPR family. P subfamily.</text>
</comment>
<comment type="online information" name="Pentatricopeptide repeat proteins">
    <link uri="https://ppr.plantenergy.uwa.edu.au"/>
</comment>
<accession>O82178</accession>
<name>PP186_ARATH</name>
<reference key="1">
    <citation type="journal article" date="1999" name="Nature">
        <title>Sequence and analysis of chromosome 2 of the plant Arabidopsis thaliana.</title>
        <authorList>
            <person name="Lin X."/>
            <person name="Kaul S."/>
            <person name="Rounsley S.D."/>
            <person name="Shea T.P."/>
            <person name="Benito M.-I."/>
            <person name="Town C.D."/>
            <person name="Fujii C.Y."/>
            <person name="Mason T.M."/>
            <person name="Bowman C.L."/>
            <person name="Barnstead M.E."/>
            <person name="Feldblyum T.V."/>
            <person name="Buell C.R."/>
            <person name="Ketchum K.A."/>
            <person name="Lee J.J."/>
            <person name="Ronning C.M."/>
            <person name="Koo H.L."/>
            <person name="Moffat K.S."/>
            <person name="Cronin L.A."/>
            <person name="Shen M."/>
            <person name="Pai G."/>
            <person name="Van Aken S."/>
            <person name="Umayam L."/>
            <person name="Tallon L.J."/>
            <person name="Gill J.E."/>
            <person name="Adams M.D."/>
            <person name="Carrera A.J."/>
            <person name="Creasy T.H."/>
            <person name="Goodman H.M."/>
            <person name="Somerville C.R."/>
            <person name="Copenhaver G.P."/>
            <person name="Preuss D."/>
            <person name="Nierman W.C."/>
            <person name="White O."/>
            <person name="Eisen J.A."/>
            <person name="Salzberg S.L."/>
            <person name="Fraser C.M."/>
            <person name="Venter J.C."/>
        </authorList>
    </citation>
    <scope>NUCLEOTIDE SEQUENCE [LARGE SCALE GENOMIC DNA]</scope>
    <source>
        <strain>cv. Columbia</strain>
    </source>
</reference>
<reference key="2">
    <citation type="journal article" date="2017" name="Plant J.">
        <title>Araport11: a complete reannotation of the Arabidopsis thaliana reference genome.</title>
        <authorList>
            <person name="Cheng C.Y."/>
            <person name="Krishnakumar V."/>
            <person name="Chan A.P."/>
            <person name="Thibaud-Nissen F."/>
            <person name="Schobel S."/>
            <person name="Town C.D."/>
        </authorList>
    </citation>
    <scope>GENOME REANNOTATION</scope>
    <source>
        <strain>cv. Columbia</strain>
    </source>
</reference>
<reference key="3">
    <citation type="journal article" date="2004" name="Plant Cell">
        <title>Genome-wide analysis of Arabidopsis pentatricopeptide repeat proteins reveals their essential role in organelle biogenesis.</title>
        <authorList>
            <person name="Lurin C."/>
            <person name="Andres C."/>
            <person name="Aubourg S."/>
            <person name="Bellaoui M."/>
            <person name="Bitton F."/>
            <person name="Bruyere C."/>
            <person name="Caboche M."/>
            <person name="Debast C."/>
            <person name="Gualberto J."/>
            <person name="Hoffmann B."/>
            <person name="Lecharny A."/>
            <person name="Le Ret M."/>
            <person name="Martin-Magniette M.-L."/>
            <person name="Mireau H."/>
            <person name="Peeters N."/>
            <person name="Renou J.-P."/>
            <person name="Szurek B."/>
            <person name="Taconnat L."/>
            <person name="Small I."/>
        </authorList>
    </citation>
    <scope>GENE FAMILY</scope>
</reference>
<sequence length="591" mass="66734">MLVAGNALNCLFIDSSGFQRYLGFGVTNLNGATVKSYKQEGFVIDERGKLKRFNRKKLSRKRCGSLRGRGWKYGSGFVDGIFPVLSPIAQKILSFIQKETDPDKVADVLGALPSTHASWDDLINVSVQLRLNKKWDSIILVCEWILRKSSFQPDVICFNLLIDAYGQKFQYKEAESLYVQLLESRYVPTEDTYALLIKAYCMAGLIERAEVVLVEMQNHHVSPKTIGVTVYNAYIEGLMKRKGNTEEAIDVFQRMKRDRCKPTTETYNLMINLYGKASKSYMSWKLYCEMRSHQCKPNICTYTALVNAFAREGLCEKAEEIFEQLQEDGLEPDVYVYNALMESYSRAGYPYGAAEIFSLMQHMGCEPDRASYNIMVDAYGRAGLHSDAEAVFEEMKRLGIAPTMKSHMLLLSAYSKARDVTKCEAIVKEMSENGVEPDTFVLNSMLNLYGRLGQFTKMEKILAEMENGPCTADISTYNILINIYGKAGFLERIEELFVELKEKNFRPDVVTWTSRIGAYSRKKLYVKCLEVFEEMIDSGCAPDGGTAKVLLSACSSEEQVEQVTSVLRTMHKGVTVSSLVPKLMAKSLTVN</sequence>
<keyword id="KW-0025">Alternative splicing</keyword>
<keyword id="KW-1185">Reference proteome</keyword>
<keyword id="KW-0677">Repeat</keyword>
<evidence type="ECO:0000305" key="1"/>
<dbReference type="EMBL" id="AC004667">
    <property type="protein sequence ID" value="AAC61823.1"/>
    <property type="molecule type" value="Genomic_DNA"/>
</dbReference>
<dbReference type="EMBL" id="CP002685">
    <property type="protein sequence ID" value="AEC09068.1"/>
    <property type="molecule type" value="Genomic_DNA"/>
</dbReference>
<dbReference type="PIR" id="A84765">
    <property type="entry name" value="A84765"/>
</dbReference>
<dbReference type="RefSeq" id="NP_181058.1">
    <molecule id="O82178-1"/>
    <property type="nucleotide sequence ID" value="NM_129066.2"/>
</dbReference>
<dbReference type="SMR" id="O82178"/>
<dbReference type="FunCoup" id="O82178">
    <property type="interactions" value="967"/>
</dbReference>
<dbReference type="STRING" id="3702.O82178"/>
<dbReference type="iPTMnet" id="O82178"/>
<dbReference type="PaxDb" id="3702-AT2G35130.2"/>
<dbReference type="ProteomicsDB" id="249080">
    <molecule id="O82178-1"/>
</dbReference>
<dbReference type="EnsemblPlants" id="AT2G35130.1">
    <molecule id="O82178-1"/>
    <property type="protein sequence ID" value="AT2G35130.1"/>
    <property type="gene ID" value="AT2G35130"/>
</dbReference>
<dbReference type="GeneID" id="818079"/>
<dbReference type="Gramene" id="AT2G35130.1">
    <molecule id="O82178-1"/>
    <property type="protein sequence ID" value="AT2G35130.1"/>
    <property type="gene ID" value="AT2G35130"/>
</dbReference>
<dbReference type="KEGG" id="ath:AT2G35130"/>
<dbReference type="Araport" id="AT2G35130"/>
<dbReference type="TAIR" id="AT2G35130">
    <property type="gene designation" value="PPR_66"/>
</dbReference>
<dbReference type="eggNOG" id="KOG4197">
    <property type="taxonomic scope" value="Eukaryota"/>
</dbReference>
<dbReference type="HOGENOM" id="CLU_002706_49_0_1"/>
<dbReference type="InParanoid" id="O82178"/>
<dbReference type="PhylomeDB" id="O82178"/>
<dbReference type="PRO" id="PR:O82178"/>
<dbReference type="Proteomes" id="UP000006548">
    <property type="component" value="Chromosome 2"/>
</dbReference>
<dbReference type="ExpressionAtlas" id="O82178">
    <property type="expression patterns" value="baseline and differential"/>
</dbReference>
<dbReference type="Gene3D" id="1.25.40.10">
    <property type="entry name" value="Tetratricopeptide repeat domain"/>
    <property type="match status" value="4"/>
</dbReference>
<dbReference type="InterPro" id="IPR002885">
    <property type="entry name" value="Pentatricopeptide_rpt"/>
</dbReference>
<dbReference type="InterPro" id="IPR051222">
    <property type="entry name" value="PPR/CCM1_RNA-binding"/>
</dbReference>
<dbReference type="InterPro" id="IPR011990">
    <property type="entry name" value="TPR-like_helical_dom_sf"/>
</dbReference>
<dbReference type="NCBIfam" id="TIGR00756">
    <property type="entry name" value="PPR"/>
    <property type="match status" value="11"/>
</dbReference>
<dbReference type="PANTHER" id="PTHR47942:SF63">
    <property type="entry name" value="PENTATRICOPEPTIDE REPEAT-CONTAINING PROTEIN"/>
    <property type="match status" value="1"/>
</dbReference>
<dbReference type="PANTHER" id="PTHR47942">
    <property type="entry name" value="TETRATRICOPEPTIDE REPEAT (TPR)-LIKE SUPERFAMILY PROTEIN-RELATED"/>
    <property type="match status" value="1"/>
</dbReference>
<dbReference type="Pfam" id="PF01535">
    <property type="entry name" value="PPR"/>
    <property type="match status" value="2"/>
</dbReference>
<dbReference type="Pfam" id="PF13041">
    <property type="entry name" value="PPR_2"/>
    <property type="match status" value="4"/>
</dbReference>
<dbReference type="Pfam" id="PF13812">
    <property type="entry name" value="PPR_3"/>
    <property type="match status" value="1"/>
</dbReference>
<dbReference type="PROSITE" id="PS51375">
    <property type="entry name" value="PPR"/>
    <property type="match status" value="12"/>
</dbReference>
<gene>
    <name type="ordered locus">At2g35130</name>
    <name type="ORF">T4C15.20</name>
</gene>
<feature type="chain" id="PRO_0000356045" description="Pentatricopeptide repeat-containing protein At2g35130">
    <location>
        <begin position="1"/>
        <end position="591"/>
    </location>
</feature>
<feature type="repeat" description="PPR 1">
    <location>
        <begin position="154"/>
        <end position="188"/>
    </location>
</feature>
<feature type="repeat" description="PPR 2">
    <location>
        <begin position="189"/>
        <end position="223"/>
    </location>
</feature>
<feature type="repeat" description="PPR 3">
    <location>
        <begin position="227"/>
        <end position="262"/>
    </location>
</feature>
<feature type="repeat" description="PPR 4">
    <location>
        <begin position="263"/>
        <end position="297"/>
    </location>
</feature>
<feature type="repeat" description="PPR 5">
    <location>
        <begin position="298"/>
        <end position="332"/>
    </location>
</feature>
<feature type="repeat" description="PPR 6">
    <location>
        <begin position="333"/>
        <end position="367"/>
    </location>
</feature>
<feature type="repeat" description="PPR 7">
    <location>
        <begin position="368"/>
        <end position="402"/>
    </location>
</feature>
<feature type="repeat" description="PPR 8">
    <location>
        <begin position="403"/>
        <end position="437"/>
    </location>
</feature>
<feature type="repeat" description="PPR 9">
    <location>
        <begin position="438"/>
        <end position="472"/>
    </location>
</feature>
<feature type="repeat" description="PPR 10">
    <location>
        <begin position="473"/>
        <end position="507"/>
    </location>
</feature>
<feature type="repeat" description="PPR 11">
    <location>
        <begin position="508"/>
        <end position="542"/>
    </location>
</feature>
<feature type="repeat" description="PPR 12">
    <location>
        <begin position="543"/>
        <end position="573"/>
    </location>
</feature>
<protein>
    <recommendedName>
        <fullName>Pentatricopeptide repeat-containing protein At2g35130</fullName>
    </recommendedName>
</protein>
<organism>
    <name type="scientific">Arabidopsis thaliana</name>
    <name type="common">Mouse-ear cress</name>
    <dbReference type="NCBI Taxonomy" id="3702"/>
    <lineage>
        <taxon>Eukaryota</taxon>
        <taxon>Viridiplantae</taxon>
        <taxon>Streptophyta</taxon>
        <taxon>Embryophyta</taxon>
        <taxon>Tracheophyta</taxon>
        <taxon>Spermatophyta</taxon>
        <taxon>Magnoliopsida</taxon>
        <taxon>eudicotyledons</taxon>
        <taxon>Gunneridae</taxon>
        <taxon>Pentapetalae</taxon>
        <taxon>rosids</taxon>
        <taxon>malvids</taxon>
        <taxon>Brassicales</taxon>
        <taxon>Brassicaceae</taxon>
        <taxon>Camelineae</taxon>
        <taxon>Arabidopsis</taxon>
    </lineage>
</organism>